<reference key="1">
    <citation type="journal article" date="1998" name="Nature">
        <title>The genome sequence of Rickettsia prowazekii and the origin of mitochondria.</title>
        <authorList>
            <person name="Andersson S.G.E."/>
            <person name="Zomorodipour A."/>
            <person name="Andersson J.O."/>
            <person name="Sicheritz-Ponten T."/>
            <person name="Alsmark U.C.M."/>
            <person name="Podowski R.M."/>
            <person name="Naeslund A.K."/>
            <person name="Eriksson A.-S."/>
            <person name="Winkler H.H."/>
            <person name="Kurland C.G."/>
        </authorList>
    </citation>
    <scope>NUCLEOTIDE SEQUENCE [LARGE SCALE GENOMIC DNA]</scope>
    <source>
        <strain>Madrid E</strain>
    </source>
</reference>
<keyword id="KW-1185">Reference proteome</keyword>
<keyword id="KW-0687">Ribonucleoprotein</keyword>
<keyword id="KW-0689">Ribosomal protein</keyword>
<keyword id="KW-0694">RNA-binding</keyword>
<keyword id="KW-0699">rRNA-binding</keyword>
<accession>Q9ZCV3</accession>
<sequence length="203" mass="22728">MSGILELEAKSRTEFGTGAARALRREGRVPAIIYGAGKTPISISLKEKEITKYYRKPAFISQLINLTIDKKQYKVLPKAVELHPVTDIVRHVDFVFLEAKTQKMEVPIVYEGKERALGVKRGGYFNIIKRRVILLCDVNNIPRNVTIDVTNMPIGTSLKSSQVELPKGCSFITKKEFVLATIIGRRGVKTEIEGEQEVAEAIQ</sequence>
<feature type="chain" id="PRO_0000181588" description="Large ribosomal subunit protein bL25">
    <location>
        <begin position="1"/>
        <end position="203"/>
    </location>
</feature>
<proteinExistence type="inferred from homology"/>
<name>RL25_RICPR</name>
<comment type="function">
    <text evidence="1">This is one of the proteins that binds to the 5S RNA in the ribosome where it forms part of the central protuberance.</text>
</comment>
<comment type="subunit">
    <text evidence="1">Part of the 50S ribosomal subunit; part of the 5S rRNA/L5/L18/L25 subcomplex. Contacts the 5S rRNA. Binds to the 5S rRNA independently of L5 and L18.</text>
</comment>
<comment type="similarity">
    <text evidence="1">Belongs to the bacterial ribosomal protein bL25 family. CTC subfamily.</text>
</comment>
<evidence type="ECO:0000255" key="1">
    <source>
        <dbReference type="HAMAP-Rule" id="MF_01334"/>
    </source>
</evidence>
<evidence type="ECO:0000305" key="2"/>
<dbReference type="EMBL" id="AJ235272">
    <property type="protein sequence ID" value="CAA15050.1"/>
    <property type="molecule type" value="Genomic_DNA"/>
</dbReference>
<dbReference type="PIR" id="H71665">
    <property type="entry name" value="H71665"/>
</dbReference>
<dbReference type="RefSeq" id="NP_220974.1">
    <property type="nucleotide sequence ID" value="NC_000963.1"/>
</dbReference>
<dbReference type="RefSeq" id="WP_004597954.1">
    <property type="nucleotide sequence ID" value="NC_000963.1"/>
</dbReference>
<dbReference type="SMR" id="Q9ZCV3"/>
<dbReference type="STRING" id="272947.gene:17555685"/>
<dbReference type="EnsemblBacteria" id="CAA15050">
    <property type="protein sequence ID" value="CAA15050"/>
    <property type="gene ID" value="CAA15050"/>
</dbReference>
<dbReference type="KEGG" id="rpr:RP606"/>
<dbReference type="PATRIC" id="fig|272947.5.peg.625"/>
<dbReference type="eggNOG" id="COG1825">
    <property type="taxonomic scope" value="Bacteria"/>
</dbReference>
<dbReference type="HOGENOM" id="CLU_075939_0_0_5"/>
<dbReference type="OrthoDB" id="9806411at2"/>
<dbReference type="Proteomes" id="UP000002480">
    <property type="component" value="Chromosome"/>
</dbReference>
<dbReference type="GO" id="GO:0022625">
    <property type="term" value="C:cytosolic large ribosomal subunit"/>
    <property type="evidence" value="ECO:0007669"/>
    <property type="project" value="TreeGrafter"/>
</dbReference>
<dbReference type="GO" id="GO:0008097">
    <property type="term" value="F:5S rRNA binding"/>
    <property type="evidence" value="ECO:0007669"/>
    <property type="project" value="InterPro"/>
</dbReference>
<dbReference type="GO" id="GO:0003735">
    <property type="term" value="F:structural constituent of ribosome"/>
    <property type="evidence" value="ECO:0007669"/>
    <property type="project" value="InterPro"/>
</dbReference>
<dbReference type="GO" id="GO:0006412">
    <property type="term" value="P:translation"/>
    <property type="evidence" value="ECO:0007669"/>
    <property type="project" value="UniProtKB-UniRule"/>
</dbReference>
<dbReference type="CDD" id="cd00495">
    <property type="entry name" value="Ribosomal_L25_TL5_CTC"/>
    <property type="match status" value="1"/>
</dbReference>
<dbReference type="Gene3D" id="2.170.120.20">
    <property type="entry name" value="Ribosomal protein L25, beta domain"/>
    <property type="match status" value="1"/>
</dbReference>
<dbReference type="Gene3D" id="2.40.240.10">
    <property type="entry name" value="Ribosomal Protein L25, Chain P"/>
    <property type="match status" value="1"/>
</dbReference>
<dbReference type="HAMAP" id="MF_01336">
    <property type="entry name" value="Ribosomal_bL25"/>
    <property type="match status" value="1"/>
</dbReference>
<dbReference type="HAMAP" id="MF_01334">
    <property type="entry name" value="Ribosomal_bL25_CTC"/>
    <property type="match status" value="1"/>
</dbReference>
<dbReference type="InterPro" id="IPR020056">
    <property type="entry name" value="Rbsml_bL25/Gln-tRNA_synth_N"/>
</dbReference>
<dbReference type="InterPro" id="IPR011035">
    <property type="entry name" value="Ribosomal_bL25/Gln-tRNA_synth"/>
</dbReference>
<dbReference type="InterPro" id="IPR020057">
    <property type="entry name" value="Ribosomal_bL25_b-dom"/>
</dbReference>
<dbReference type="InterPro" id="IPR037121">
    <property type="entry name" value="Ribosomal_bL25_C"/>
</dbReference>
<dbReference type="InterPro" id="IPR001021">
    <property type="entry name" value="Ribosomal_bL25_long"/>
</dbReference>
<dbReference type="InterPro" id="IPR020055">
    <property type="entry name" value="Ribosomal_bL25_short"/>
</dbReference>
<dbReference type="InterPro" id="IPR029751">
    <property type="entry name" value="Ribosomal_L25_dom"/>
</dbReference>
<dbReference type="InterPro" id="IPR020930">
    <property type="entry name" value="Ribosomal_uL5_bac-type"/>
</dbReference>
<dbReference type="NCBIfam" id="TIGR00731">
    <property type="entry name" value="bL25_bact_ctc"/>
    <property type="match status" value="1"/>
</dbReference>
<dbReference type="NCBIfam" id="NF004128">
    <property type="entry name" value="PRK05618.1-2"/>
    <property type="match status" value="1"/>
</dbReference>
<dbReference type="NCBIfam" id="NF004612">
    <property type="entry name" value="PRK05943.1"/>
    <property type="match status" value="1"/>
</dbReference>
<dbReference type="PANTHER" id="PTHR33284">
    <property type="entry name" value="RIBOSOMAL PROTEIN L25/GLN-TRNA SYNTHETASE, ANTI-CODON-BINDING DOMAIN-CONTAINING PROTEIN"/>
    <property type="match status" value="1"/>
</dbReference>
<dbReference type="PANTHER" id="PTHR33284:SF1">
    <property type="entry name" value="RIBOSOMAL PROTEIN L25_GLN-TRNA SYNTHETASE, ANTI-CODON-BINDING DOMAIN-CONTAINING PROTEIN"/>
    <property type="match status" value="1"/>
</dbReference>
<dbReference type="Pfam" id="PF01386">
    <property type="entry name" value="Ribosomal_L25p"/>
    <property type="match status" value="1"/>
</dbReference>
<dbReference type="Pfam" id="PF14693">
    <property type="entry name" value="Ribosomal_TL5_C"/>
    <property type="match status" value="1"/>
</dbReference>
<dbReference type="SUPFAM" id="SSF50715">
    <property type="entry name" value="Ribosomal protein L25-like"/>
    <property type="match status" value="1"/>
</dbReference>
<protein>
    <recommendedName>
        <fullName evidence="1">Large ribosomal subunit protein bL25</fullName>
    </recommendedName>
    <alternativeName>
        <fullName evidence="2">50S ribosomal protein L25</fullName>
    </alternativeName>
    <alternativeName>
        <fullName evidence="1">General stress protein CTC</fullName>
    </alternativeName>
</protein>
<organism>
    <name type="scientific">Rickettsia prowazekii (strain Madrid E)</name>
    <dbReference type="NCBI Taxonomy" id="272947"/>
    <lineage>
        <taxon>Bacteria</taxon>
        <taxon>Pseudomonadati</taxon>
        <taxon>Pseudomonadota</taxon>
        <taxon>Alphaproteobacteria</taxon>
        <taxon>Rickettsiales</taxon>
        <taxon>Rickettsiaceae</taxon>
        <taxon>Rickettsieae</taxon>
        <taxon>Rickettsia</taxon>
        <taxon>typhus group</taxon>
    </lineage>
</organism>
<gene>
    <name evidence="1" type="primary">rplY</name>
    <name evidence="1" type="synonym">ctc</name>
    <name type="ordered locus">RP606</name>
</gene>